<accession>Q254V8</accession>
<sequence length="254" mass="28327">MEEQVFASKKVGVLPARWGSVRFTGKPLANILGKSLIQRTYENISQSTTLDKVVVATDNQRIMDHVLDFGGDCVMTSPECANGTERTAEAISRYFPEAEIIVNIQGDEPCLQHTVVDTLVRKLEESPEIQVVTPAAKTTDSHEILTNQKVKCVFDKNGKALYFSRSPIPHILKKETPIYLHIGVYAFRRNALFSYIESTPTSLSQAEDLEQLRILEHGGSIHICVVEAKSPSVDYPEDINKVEKYLTCHSSASF</sequence>
<gene>
    <name evidence="1" type="primary">kdsB</name>
    <name type="ordered locus">CF0408</name>
</gene>
<organism>
    <name type="scientific">Chlamydia felis (strain Fe/C-56)</name>
    <name type="common">Chlamydophila felis</name>
    <dbReference type="NCBI Taxonomy" id="264202"/>
    <lineage>
        <taxon>Bacteria</taxon>
        <taxon>Pseudomonadati</taxon>
        <taxon>Chlamydiota</taxon>
        <taxon>Chlamydiia</taxon>
        <taxon>Chlamydiales</taxon>
        <taxon>Chlamydiaceae</taxon>
        <taxon>Chlamydia/Chlamydophila group</taxon>
        <taxon>Chlamydia</taxon>
    </lineage>
</organism>
<feature type="chain" id="PRO_1000003354" description="3-deoxy-manno-octulosonate cytidylyltransferase">
    <location>
        <begin position="1"/>
        <end position="254"/>
    </location>
</feature>
<reference key="1">
    <citation type="journal article" date="2006" name="DNA Res.">
        <title>Genome sequence of the cat pathogen, Chlamydophila felis.</title>
        <authorList>
            <person name="Azuma Y."/>
            <person name="Hirakawa H."/>
            <person name="Yamashita A."/>
            <person name="Cai Y."/>
            <person name="Rahman M.A."/>
            <person name="Suzuki H."/>
            <person name="Mitaku S."/>
            <person name="Toh H."/>
            <person name="Goto S."/>
            <person name="Murakami T."/>
            <person name="Sugi K."/>
            <person name="Hayashi H."/>
            <person name="Fukushi H."/>
            <person name="Hattori M."/>
            <person name="Kuhara S."/>
            <person name="Shirai M."/>
        </authorList>
    </citation>
    <scope>NUCLEOTIDE SEQUENCE [LARGE SCALE GENOMIC DNA]</scope>
    <source>
        <strain>Fe/C-56</strain>
    </source>
</reference>
<dbReference type="EC" id="2.7.7.38" evidence="1"/>
<dbReference type="EMBL" id="AP006861">
    <property type="protein sequence ID" value="BAE81180.1"/>
    <property type="molecule type" value="Genomic_DNA"/>
</dbReference>
<dbReference type="RefSeq" id="WP_011457960.1">
    <property type="nucleotide sequence ID" value="NC_007899.1"/>
</dbReference>
<dbReference type="SMR" id="Q254V8"/>
<dbReference type="STRING" id="264202.CF0408"/>
<dbReference type="KEGG" id="cfe:CF0408"/>
<dbReference type="eggNOG" id="COG1212">
    <property type="taxonomic scope" value="Bacteria"/>
</dbReference>
<dbReference type="HOGENOM" id="CLU_065038_0_1_0"/>
<dbReference type="OrthoDB" id="9815559at2"/>
<dbReference type="UniPathway" id="UPA00030"/>
<dbReference type="UniPathway" id="UPA00358">
    <property type="reaction ID" value="UER00476"/>
</dbReference>
<dbReference type="Proteomes" id="UP000001260">
    <property type="component" value="Chromosome"/>
</dbReference>
<dbReference type="GO" id="GO:0005829">
    <property type="term" value="C:cytosol"/>
    <property type="evidence" value="ECO:0007669"/>
    <property type="project" value="TreeGrafter"/>
</dbReference>
<dbReference type="GO" id="GO:0008690">
    <property type="term" value="F:3-deoxy-manno-octulosonate cytidylyltransferase activity"/>
    <property type="evidence" value="ECO:0007669"/>
    <property type="project" value="UniProtKB-UniRule"/>
</dbReference>
<dbReference type="GO" id="GO:0033468">
    <property type="term" value="P:CMP-keto-3-deoxy-D-manno-octulosonic acid biosynthetic process"/>
    <property type="evidence" value="ECO:0007669"/>
    <property type="project" value="UniProtKB-UniRule"/>
</dbReference>
<dbReference type="GO" id="GO:0009103">
    <property type="term" value="P:lipopolysaccharide biosynthetic process"/>
    <property type="evidence" value="ECO:0007669"/>
    <property type="project" value="UniProtKB-UniRule"/>
</dbReference>
<dbReference type="CDD" id="cd02517">
    <property type="entry name" value="CMP-KDO-Synthetase"/>
    <property type="match status" value="1"/>
</dbReference>
<dbReference type="FunFam" id="3.90.550.10:FF:000011">
    <property type="entry name" value="3-deoxy-manno-octulosonate cytidylyltransferase"/>
    <property type="match status" value="1"/>
</dbReference>
<dbReference type="Gene3D" id="3.90.550.10">
    <property type="entry name" value="Spore Coat Polysaccharide Biosynthesis Protein SpsA, Chain A"/>
    <property type="match status" value="1"/>
</dbReference>
<dbReference type="HAMAP" id="MF_00057">
    <property type="entry name" value="KdsB"/>
    <property type="match status" value="1"/>
</dbReference>
<dbReference type="InterPro" id="IPR003329">
    <property type="entry name" value="Cytidylyl_trans"/>
</dbReference>
<dbReference type="InterPro" id="IPR004528">
    <property type="entry name" value="KdsB"/>
</dbReference>
<dbReference type="InterPro" id="IPR029044">
    <property type="entry name" value="Nucleotide-diphossugar_trans"/>
</dbReference>
<dbReference type="NCBIfam" id="TIGR00466">
    <property type="entry name" value="kdsB"/>
    <property type="match status" value="1"/>
</dbReference>
<dbReference type="NCBIfam" id="NF003950">
    <property type="entry name" value="PRK05450.1-3"/>
    <property type="match status" value="1"/>
</dbReference>
<dbReference type="NCBIfam" id="NF003952">
    <property type="entry name" value="PRK05450.1-5"/>
    <property type="match status" value="1"/>
</dbReference>
<dbReference type="NCBIfam" id="NF009905">
    <property type="entry name" value="PRK13368.1"/>
    <property type="match status" value="1"/>
</dbReference>
<dbReference type="PANTHER" id="PTHR42866">
    <property type="entry name" value="3-DEOXY-MANNO-OCTULOSONATE CYTIDYLYLTRANSFERASE"/>
    <property type="match status" value="1"/>
</dbReference>
<dbReference type="PANTHER" id="PTHR42866:SF2">
    <property type="entry name" value="3-DEOXY-MANNO-OCTULOSONATE CYTIDYLYLTRANSFERASE, MITOCHONDRIAL"/>
    <property type="match status" value="1"/>
</dbReference>
<dbReference type="Pfam" id="PF02348">
    <property type="entry name" value="CTP_transf_3"/>
    <property type="match status" value="1"/>
</dbReference>
<dbReference type="SUPFAM" id="SSF53448">
    <property type="entry name" value="Nucleotide-diphospho-sugar transferases"/>
    <property type="match status" value="1"/>
</dbReference>
<name>KDSB_CHLFF</name>
<evidence type="ECO:0000255" key="1">
    <source>
        <dbReference type="HAMAP-Rule" id="MF_00057"/>
    </source>
</evidence>
<comment type="function">
    <text evidence="1">Activates KDO (a required 8-carbon sugar) for incorporation into bacterial lipopolysaccharide in Gram-negative bacteria.</text>
</comment>
<comment type="catalytic activity">
    <reaction evidence="1">
        <text>3-deoxy-alpha-D-manno-oct-2-ulosonate + CTP = CMP-3-deoxy-beta-D-manno-octulosonate + diphosphate</text>
        <dbReference type="Rhea" id="RHEA:23448"/>
        <dbReference type="ChEBI" id="CHEBI:33019"/>
        <dbReference type="ChEBI" id="CHEBI:37563"/>
        <dbReference type="ChEBI" id="CHEBI:85986"/>
        <dbReference type="ChEBI" id="CHEBI:85987"/>
        <dbReference type="EC" id="2.7.7.38"/>
    </reaction>
</comment>
<comment type="pathway">
    <text evidence="1">Nucleotide-sugar biosynthesis; CMP-3-deoxy-D-manno-octulosonate biosynthesis; CMP-3-deoxy-D-manno-octulosonate from 3-deoxy-D-manno-octulosonate and CTP: step 1/1.</text>
</comment>
<comment type="pathway">
    <text evidence="1">Bacterial outer membrane biogenesis; lipopolysaccharide biosynthesis.</text>
</comment>
<comment type="subcellular location">
    <subcellularLocation>
        <location evidence="1">Cytoplasm</location>
    </subcellularLocation>
</comment>
<comment type="similarity">
    <text evidence="1">Belongs to the KdsB family.</text>
</comment>
<protein>
    <recommendedName>
        <fullName evidence="1">3-deoxy-manno-octulosonate cytidylyltransferase</fullName>
        <ecNumber evidence="1">2.7.7.38</ecNumber>
    </recommendedName>
    <alternativeName>
        <fullName evidence="1">CMP-2-keto-3-deoxyoctulosonic acid synthase</fullName>
        <shortName evidence="1">CKS</shortName>
        <shortName evidence="1">CMP-KDO synthase</shortName>
    </alternativeName>
</protein>
<keyword id="KW-0963">Cytoplasm</keyword>
<keyword id="KW-0448">Lipopolysaccharide biosynthesis</keyword>
<keyword id="KW-0548">Nucleotidyltransferase</keyword>
<keyword id="KW-0808">Transferase</keyword>
<proteinExistence type="inferred from homology"/>